<feature type="chain" id="PRO_0000327963" description="Alpha-1,3/1,6-mannosyltransferase ALG2">
    <location>
        <begin position="1"/>
        <end position="420"/>
    </location>
</feature>
<feature type="transmembrane region" description="Helical" evidence="2">
    <location>
        <begin position="79"/>
        <end position="99"/>
    </location>
</feature>
<gene>
    <name type="primary">alg2</name>
    <name type="ORF">DDB_G0272730</name>
</gene>
<dbReference type="EC" id="2.4.1.132" evidence="1"/>
<dbReference type="EC" id="2.4.1.257" evidence="1"/>
<dbReference type="EMBL" id="AAFI02000008">
    <property type="protein sequence ID" value="EAL71002.1"/>
    <property type="molecule type" value="Genomic_DNA"/>
</dbReference>
<dbReference type="RefSeq" id="XP_644980.1">
    <property type="nucleotide sequence ID" value="XM_639888.1"/>
</dbReference>
<dbReference type="SMR" id="Q7KWM5"/>
<dbReference type="FunCoup" id="Q7KWM5">
    <property type="interactions" value="696"/>
</dbReference>
<dbReference type="STRING" id="44689.Q7KWM5"/>
<dbReference type="PaxDb" id="44689-DDB0231364"/>
<dbReference type="EnsemblProtists" id="EAL71002">
    <property type="protein sequence ID" value="EAL71002"/>
    <property type="gene ID" value="DDB_G0272730"/>
</dbReference>
<dbReference type="GeneID" id="8618657"/>
<dbReference type="KEGG" id="ddi:DDB_G0272730"/>
<dbReference type="dictyBase" id="DDB_G0272730">
    <property type="gene designation" value="alg2"/>
</dbReference>
<dbReference type="VEuPathDB" id="AmoebaDB:DDB_G0272730"/>
<dbReference type="eggNOG" id="KOG0853">
    <property type="taxonomic scope" value="Eukaryota"/>
</dbReference>
<dbReference type="HOGENOM" id="CLU_030619_1_0_1"/>
<dbReference type="InParanoid" id="Q7KWM5"/>
<dbReference type="OMA" id="AMYMKCP"/>
<dbReference type="PhylomeDB" id="Q7KWM5"/>
<dbReference type="Reactome" id="R-DDI-446193">
    <property type="pathway name" value="Biosynthesis of the N-glycan precursor (dolichol lipid-linked oligosaccharide, LLO) and transfer to a nascent protein"/>
</dbReference>
<dbReference type="UniPathway" id="UPA00378"/>
<dbReference type="PRO" id="PR:Q7KWM5"/>
<dbReference type="Proteomes" id="UP000002195">
    <property type="component" value="Chromosome 2"/>
</dbReference>
<dbReference type="GO" id="GO:0012505">
    <property type="term" value="C:endomembrane system"/>
    <property type="evidence" value="ECO:0000318"/>
    <property type="project" value="GO_Central"/>
</dbReference>
<dbReference type="GO" id="GO:0005789">
    <property type="term" value="C:endoplasmic reticulum membrane"/>
    <property type="evidence" value="ECO:0007669"/>
    <property type="project" value="UniProtKB-SubCell"/>
</dbReference>
<dbReference type="GO" id="GO:0005811">
    <property type="term" value="C:lipid droplet"/>
    <property type="evidence" value="ECO:0007005"/>
    <property type="project" value="dictyBase"/>
</dbReference>
<dbReference type="GO" id="GO:0000033">
    <property type="term" value="F:alpha-1,3-mannosyltransferase activity"/>
    <property type="evidence" value="ECO:0000318"/>
    <property type="project" value="GO_Central"/>
</dbReference>
<dbReference type="GO" id="GO:0004378">
    <property type="term" value="F:GDP-Man:Man1GlcNAc2-PP-Dol alpha-1,3-mannosyltransferase activity"/>
    <property type="evidence" value="ECO:0007669"/>
    <property type="project" value="UniProtKB-EC"/>
</dbReference>
<dbReference type="GO" id="GO:0102704">
    <property type="term" value="F:GDP-Man:Man2GlcNAc2-PP-dolichol alpha-1,6-mannosyltransferase activity"/>
    <property type="evidence" value="ECO:0007669"/>
    <property type="project" value="UniProtKB-EC"/>
</dbReference>
<dbReference type="GO" id="GO:0004376">
    <property type="term" value="F:glycolipid mannosyltransferase activity"/>
    <property type="evidence" value="ECO:0000250"/>
    <property type="project" value="dictyBase"/>
</dbReference>
<dbReference type="GO" id="GO:0006488">
    <property type="term" value="P:dolichol-linked oligosaccharide biosynthetic process"/>
    <property type="evidence" value="ECO:0000250"/>
    <property type="project" value="dictyBase"/>
</dbReference>
<dbReference type="CDD" id="cd03805">
    <property type="entry name" value="GT4_ALG2-like"/>
    <property type="match status" value="1"/>
</dbReference>
<dbReference type="FunFam" id="3.40.50.2000:FF:000210">
    <property type="entry name" value="Alpha-1,3/1,6-mannosyltransferase ALG2"/>
    <property type="match status" value="1"/>
</dbReference>
<dbReference type="FunFam" id="3.40.50.2000:FF:000630">
    <property type="entry name" value="Alpha-1,3/1,6-mannosyltransferase ALG2"/>
    <property type="match status" value="1"/>
</dbReference>
<dbReference type="Gene3D" id="3.40.50.2000">
    <property type="entry name" value="Glycogen Phosphorylase B"/>
    <property type="match status" value="2"/>
</dbReference>
<dbReference type="InterPro" id="IPR027054">
    <property type="entry name" value="ALG2"/>
</dbReference>
<dbReference type="InterPro" id="IPR001296">
    <property type="entry name" value="Glyco_trans_1"/>
</dbReference>
<dbReference type="InterPro" id="IPR028098">
    <property type="entry name" value="Glyco_trans_4-like_N"/>
</dbReference>
<dbReference type="PANTHER" id="PTHR45918">
    <property type="entry name" value="ALPHA-1,3/1,6-MANNOSYLTRANSFERASE ALG2"/>
    <property type="match status" value="1"/>
</dbReference>
<dbReference type="PANTHER" id="PTHR45918:SF1">
    <property type="entry name" value="ALPHA-1,3_1,6-MANNOSYLTRANSFERASE ALG2"/>
    <property type="match status" value="1"/>
</dbReference>
<dbReference type="Pfam" id="PF13439">
    <property type="entry name" value="Glyco_transf_4"/>
    <property type="match status" value="1"/>
</dbReference>
<dbReference type="Pfam" id="PF00534">
    <property type="entry name" value="Glycos_transf_1"/>
    <property type="match status" value="1"/>
</dbReference>
<dbReference type="SUPFAM" id="SSF53756">
    <property type="entry name" value="UDP-Glycosyltransferase/glycogen phosphorylase"/>
    <property type="match status" value="1"/>
</dbReference>
<proteinExistence type="inferred from homology"/>
<name>ALG2_DICDI</name>
<reference key="1">
    <citation type="journal article" date="2002" name="Nature">
        <title>Sequence and analysis of chromosome 2 of Dictyostelium discoideum.</title>
        <authorList>
            <person name="Gloeckner G."/>
            <person name="Eichinger L."/>
            <person name="Szafranski K."/>
            <person name="Pachebat J.A."/>
            <person name="Bankier A.T."/>
            <person name="Dear P.H."/>
            <person name="Lehmann R."/>
            <person name="Baumgart C."/>
            <person name="Parra G."/>
            <person name="Abril J.F."/>
            <person name="Guigo R."/>
            <person name="Kumpf K."/>
            <person name="Tunggal B."/>
            <person name="Cox E.C."/>
            <person name="Quail M.A."/>
            <person name="Platzer M."/>
            <person name="Rosenthal A."/>
            <person name="Noegel A.A."/>
        </authorList>
    </citation>
    <scope>NUCLEOTIDE SEQUENCE [LARGE SCALE GENOMIC DNA]</scope>
    <source>
        <strain>AX4</strain>
    </source>
</reference>
<reference key="2">
    <citation type="journal article" date="2005" name="Nature">
        <title>The genome of the social amoeba Dictyostelium discoideum.</title>
        <authorList>
            <person name="Eichinger L."/>
            <person name="Pachebat J.A."/>
            <person name="Gloeckner G."/>
            <person name="Rajandream M.A."/>
            <person name="Sucgang R."/>
            <person name="Berriman M."/>
            <person name="Song J."/>
            <person name="Olsen R."/>
            <person name="Szafranski K."/>
            <person name="Xu Q."/>
            <person name="Tunggal B."/>
            <person name="Kummerfeld S."/>
            <person name="Madera M."/>
            <person name="Konfortov B.A."/>
            <person name="Rivero F."/>
            <person name="Bankier A.T."/>
            <person name="Lehmann R."/>
            <person name="Hamlin N."/>
            <person name="Davies R."/>
            <person name="Gaudet P."/>
            <person name="Fey P."/>
            <person name="Pilcher K."/>
            <person name="Chen G."/>
            <person name="Saunders D."/>
            <person name="Sodergren E.J."/>
            <person name="Davis P."/>
            <person name="Kerhornou A."/>
            <person name="Nie X."/>
            <person name="Hall N."/>
            <person name="Anjard C."/>
            <person name="Hemphill L."/>
            <person name="Bason N."/>
            <person name="Farbrother P."/>
            <person name="Desany B."/>
            <person name="Just E."/>
            <person name="Morio T."/>
            <person name="Rost R."/>
            <person name="Churcher C.M."/>
            <person name="Cooper J."/>
            <person name="Haydock S."/>
            <person name="van Driessche N."/>
            <person name="Cronin A."/>
            <person name="Goodhead I."/>
            <person name="Muzny D.M."/>
            <person name="Mourier T."/>
            <person name="Pain A."/>
            <person name="Lu M."/>
            <person name="Harper D."/>
            <person name="Lindsay R."/>
            <person name="Hauser H."/>
            <person name="James K.D."/>
            <person name="Quiles M."/>
            <person name="Madan Babu M."/>
            <person name="Saito T."/>
            <person name="Buchrieser C."/>
            <person name="Wardroper A."/>
            <person name="Felder M."/>
            <person name="Thangavelu M."/>
            <person name="Johnson D."/>
            <person name="Knights A."/>
            <person name="Loulseged H."/>
            <person name="Mungall K.L."/>
            <person name="Oliver K."/>
            <person name="Price C."/>
            <person name="Quail M.A."/>
            <person name="Urushihara H."/>
            <person name="Hernandez J."/>
            <person name="Rabbinowitsch E."/>
            <person name="Steffen D."/>
            <person name="Sanders M."/>
            <person name="Ma J."/>
            <person name="Kohara Y."/>
            <person name="Sharp S."/>
            <person name="Simmonds M.N."/>
            <person name="Spiegler S."/>
            <person name="Tivey A."/>
            <person name="Sugano S."/>
            <person name="White B."/>
            <person name="Walker D."/>
            <person name="Woodward J.R."/>
            <person name="Winckler T."/>
            <person name="Tanaka Y."/>
            <person name="Shaulsky G."/>
            <person name="Schleicher M."/>
            <person name="Weinstock G.M."/>
            <person name="Rosenthal A."/>
            <person name="Cox E.C."/>
            <person name="Chisholm R.L."/>
            <person name="Gibbs R.A."/>
            <person name="Loomis W.F."/>
            <person name="Platzer M."/>
            <person name="Kay R.R."/>
            <person name="Williams J.G."/>
            <person name="Dear P.H."/>
            <person name="Noegel A.A."/>
            <person name="Barrell B.G."/>
            <person name="Kuspa A."/>
        </authorList>
    </citation>
    <scope>NUCLEOTIDE SEQUENCE [LARGE SCALE GENOMIC DNA]</scope>
    <source>
        <strain>AX4</strain>
    </source>
</reference>
<protein>
    <recommendedName>
        <fullName>Alpha-1,3/1,6-mannosyltransferase ALG2</fullName>
        <ecNumber evidence="1">2.4.1.132</ecNumber>
        <ecNumber evidence="1">2.4.1.257</ecNumber>
    </recommendedName>
    <alternativeName>
        <fullName>Asparagine-linked glycosylation protein 2 homolog</fullName>
    </alternativeName>
    <alternativeName>
        <fullName>GDP-Man:Man(1)GlcNAc(2)-PP-Dol alpha-1,3-mannosyltransferase</fullName>
    </alternativeName>
    <alternativeName>
        <fullName>GDP-Man:Man(1)GlcNAc(2)-PP-dolichol mannosyltransferase</fullName>
    </alternativeName>
    <alternativeName>
        <fullName>GDP-Man:Man(2)GlcNAc(2)-PP-Dol alpha-1,6-mannosyltransferase</fullName>
    </alternativeName>
</protein>
<sequence length="420" mass="47614">MVKDEKELNIAILHPDLGIGGAERLIVDLALGLKSVGNNRITMYTSRHDPKRCFKETSNGELDVHVTGGYFPRHIFNRFMVICAIIRNLLAALYIIFFSGQKYDVIVLDQISASIPLFKLFTNSKVLFYCHFPDKLLTSRTSLIKRLYRIPIDLFEEFTTGCADQVLVNSNFTSSIYKQSFKHLKNSPSVLYPIINTNEFDKTKQSHNFSNQPIENNLINPIKLDDKKFFLSINRYERKKDLKLALDAFSVFISNSESGGSGKGKDEIYLVFAGGYDTGLKENVEHLQELKDKAKEYGLENRVIFLITINEEQKQWLLLNCCCLIYTPSFEHFGITPLEGMYAGKPVIAVNNGGPLETVVDGKTGYLCNPTVKDFANAFNKIINDPINSKKMGINGKQRVNDKFSFKPFAQNLNTIVKKL</sequence>
<organism>
    <name type="scientific">Dictyostelium discoideum</name>
    <name type="common">Social amoeba</name>
    <dbReference type="NCBI Taxonomy" id="44689"/>
    <lineage>
        <taxon>Eukaryota</taxon>
        <taxon>Amoebozoa</taxon>
        <taxon>Evosea</taxon>
        <taxon>Eumycetozoa</taxon>
        <taxon>Dictyostelia</taxon>
        <taxon>Dictyosteliales</taxon>
        <taxon>Dictyosteliaceae</taxon>
        <taxon>Dictyostelium</taxon>
    </lineage>
</organism>
<comment type="function">
    <text evidence="1">Mannosylates Man(2)GlcNAc(2)-dolichol diphosphate and Man(1)GlcNAc(2)-dolichol diphosphate to form Man(3)GlcNAc(2)-dolichol diphosphate.</text>
</comment>
<comment type="catalytic activity">
    <reaction evidence="1">
        <text>a beta-D-Man-(1-&gt;4)-beta-D-GlcNAc-(1-&gt;4)-alpha-D-GlcNAc-diphospho-di-trans,poly-cis-dolichol + GDP-alpha-D-mannose = an alpha-D-Man-(1-&gt;3)-beta-D-Man-(1-&gt;4)-beta-D-GlcNAc-(1-&gt;4)-alpha-D-GlcNAc-diphospho-di-trans,poly-cis-dolichol + GDP + H(+)</text>
        <dbReference type="Rhea" id="RHEA:29515"/>
        <dbReference type="Rhea" id="RHEA-COMP:19511"/>
        <dbReference type="Rhea" id="RHEA-COMP:19513"/>
        <dbReference type="ChEBI" id="CHEBI:15378"/>
        <dbReference type="ChEBI" id="CHEBI:57527"/>
        <dbReference type="ChEBI" id="CHEBI:58189"/>
        <dbReference type="ChEBI" id="CHEBI:58472"/>
        <dbReference type="ChEBI" id="CHEBI:132510"/>
        <dbReference type="EC" id="2.4.1.132"/>
    </reaction>
    <physiologicalReaction direction="left-to-right" evidence="1">
        <dbReference type="Rhea" id="RHEA:29516"/>
    </physiologicalReaction>
</comment>
<comment type="catalytic activity">
    <reaction evidence="1">
        <text>an alpha-D-Man-(1-&gt;3)-beta-D-Man-(1-&gt;4)-beta-D-GlcNAc-(1-&gt;4)-alpha-D-GlcNAc-diphospho-di-trans,poly-cis-dolichol + GDP-alpha-D-mannose = an alpha-D-Man-(1-&gt;3)-[alpha-D-Man-(1-&gt;6)]-beta-D-Man-(1-&gt;4)-beta-D-GlcNAc-(1-&gt;4)-alpha-D-GlcNAc-diphospho-di-trans,poly-cis-dolichol + GDP + H(+)</text>
        <dbReference type="Rhea" id="RHEA:29519"/>
        <dbReference type="Rhea" id="RHEA-COMP:19513"/>
        <dbReference type="Rhea" id="RHEA-COMP:19515"/>
        <dbReference type="ChEBI" id="CHEBI:15378"/>
        <dbReference type="ChEBI" id="CHEBI:57527"/>
        <dbReference type="ChEBI" id="CHEBI:58189"/>
        <dbReference type="ChEBI" id="CHEBI:132510"/>
        <dbReference type="ChEBI" id="CHEBI:132511"/>
        <dbReference type="EC" id="2.4.1.257"/>
    </reaction>
    <physiologicalReaction direction="left-to-right" evidence="1">
        <dbReference type="Rhea" id="RHEA:29520"/>
    </physiologicalReaction>
</comment>
<comment type="pathway">
    <text evidence="1">Protein modification; protein glycosylation.</text>
</comment>
<comment type="subcellular location">
    <subcellularLocation>
        <location evidence="1">Endoplasmic reticulum membrane</location>
        <topology evidence="2">Single-pass membrane protein</topology>
    </subcellularLocation>
</comment>
<comment type="similarity">
    <text evidence="3">Belongs to the glycosyltransferase group 1 family.</text>
</comment>
<accession>Q7KWM5</accession>
<accession>Q558T6</accession>
<keyword id="KW-0256">Endoplasmic reticulum</keyword>
<keyword id="KW-0328">Glycosyltransferase</keyword>
<keyword id="KW-0472">Membrane</keyword>
<keyword id="KW-1185">Reference proteome</keyword>
<keyword id="KW-0808">Transferase</keyword>
<keyword id="KW-0812">Transmembrane</keyword>
<keyword id="KW-1133">Transmembrane helix</keyword>
<evidence type="ECO:0000250" key="1">
    <source>
        <dbReference type="UniProtKB" id="P43636"/>
    </source>
</evidence>
<evidence type="ECO:0000255" key="2"/>
<evidence type="ECO:0000305" key="3"/>